<dbReference type="EMBL" id="AC234783">
    <property type="status" value="NOT_ANNOTATED_CDS"/>
    <property type="molecule type" value="Genomic_DNA"/>
</dbReference>
<dbReference type="CCDS" id="CCDS94644.1"/>
<dbReference type="RefSeq" id="NP_001382859.1">
    <property type="nucleotide sequence ID" value="NM_001395930.1"/>
</dbReference>
<dbReference type="SMR" id="P0DX04"/>
<dbReference type="GlyGen" id="P0DX04">
    <property type="glycosylation" value="2 sites, 1 O-linked glycan (2 sites)"/>
</dbReference>
<dbReference type="Ensembl" id="ENST00000598087.4">
    <property type="protein sequence ID" value="ENSP00000472749.1"/>
    <property type="gene ID" value="ENSG00000269226.8"/>
</dbReference>
<dbReference type="GeneID" id="122394733"/>
<dbReference type="KEGG" id="hsa:11013"/>
<dbReference type="KEGG" id="hsa:286527"/>
<dbReference type="MANE-Select" id="ENST00000598087.4">
    <property type="protein sequence ID" value="ENSP00000472749.1"/>
    <property type="RefSeq nucleotide sequence ID" value="NM_001395930.1"/>
    <property type="RefSeq protein sequence ID" value="NP_001382859.1"/>
</dbReference>
<dbReference type="AGR" id="HGNC:28612"/>
<dbReference type="AGR" id="HGNC:30744"/>
<dbReference type="AGR" id="HGNC:55173"/>
<dbReference type="CTD" id="11013"/>
<dbReference type="CTD" id="286527"/>
<dbReference type="GeneCards" id="TMSB15C"/>
<dbReference type="HGNC" id="HGNC:55173">
    <property type="gene designation" value="TMSB15C"/>
</dbReference>
<dbReference type="OpenTargets" id="ENSG00000158164"/>
<dbReference type="OpenTargets" id="ENSG00000158427"/>
<dbReference type="OpenTargets" id="ENSG00000269226"/>
<dbReference type="GeneTree" id="ENSGT00940000161604"/>
<dbReference type="PRO" id="PR:P0DX04"/>
<dbReference type="Proteomes" id="UP000005640">
    <property type="component" value="Chromosome X"/>
</dbReference>
<dbReference type="GO" id="GO:0005737">
    <property type="term" value="C:cytoplasm"/>
    <property type="evidence" value="ECO:0007669"/>
    <property type="project" value="UniProtKB-KW"/>
</dbReference>
<dbReference type="GO" id="GO:0005856">
    <property type="term" value="C:cytoskeleton"/>
    <property type="evidence" value="ECO:0007669"/>
    <property type="project" value="UniProtKB-SubCell"/>
</dbReference>
<dbReference type="GO" id="GO:0003785">
    <property type="term" value="F:actin monomer binding"/>
    <property type="evidence" value="ECO:0007669"/>
    <property type="project" value="InterPro"/>
</dbReference>
<dbReference type="GO" id="GO:0007015">
    <property type="term" value="P:actin filament organization"/>
    <property type="evidence" value="ECO:0007669"/>
    <property type="project" value="InterPro"/>
</dbReference>
<dbReference type="FunFam" id="1.20.5.520:FF:000001">
    <property type="entry name" value="Thymosin beta"/>
    <property type="match status" value="1"/>
</dbReference>
<dbReference type="Gene3D" id="1.20.5.520">
    <property type="entry name" value="Single helix bin"/>
    <property type="match status" value="1"/>
</dbReference>
<dbReference type="InterPro" id="IPR001152">
    <property type="entry name" value="Beta-thymosin"/>
</dbReference>
<dbReference type="InterPro" id="IPR038386">
    <property type="entry name" value="Beta-thymosin_sf"/>
</dbReference>
<dbReference type="PANTHER" id="PTHR12021">
    <property type="entry name" value="THYMOSIN BETA"/>
    <property type="match status" value="1"/>
</dbReference>
<dbReference type="PANTHER" id="PTHR12021:SF11">
    <property type="entry name" value="THYMOSIN BETA-15A-RELATED"/>
    <property type="match status" value="1"/>
</dbReference>
<dbReference type="Pfam" id="PF01290">
    <property type="entry name" value="Thymosin"/>
    <property type="match status" value="1"/>
</dbReference>
<dbReference type="PIRSF" id="PIRSF001828">
    <property type="entry name" value="Thymosin_beta"/>
    <property type="match status" value="1"/>
</dbReference>
<dbReference type="SMART" id="SM00152">
    <property type="entry name" value="THY"/>
    <property type="match status" value="1"/>
</dbReference>
<dbReference type="PROSITE" id="PS00500">
    <property type="entry name" value="THYMOSIN_B4"/>
    <property type="match status" value="1"/>
</dbReference>
<name>TB15C_HUMAN</name>
<accession>P0DX04</accession>
<reference key="1">
    <citation type="journal article" date="2005" name="Nature">
        <title>The DNA sequence of the human X chromosome.</title>
        <authorList>
            <person name="Ross M.T."/>
            <person name="Grafham D.V."/>
            <person name="Coffey A.J."/>
            <person name="Scherer S."/>
            <person name="McLay K."/>
            <person name="Muzny D."/>
            <person name="Platzer M."/>
            <person name="Howell G.R."/>
            <person name="Burrows C."/>
            <person name="Bird C.P."/>
            <person name="Frankish A."/>
            <person name="Lovell F.L."/>
            <person name="Howe K.L."/>
            <person name="Ashurst J.L."/>
            <person name="Fulton R.S."/>
            <person name="Sudbrak R."/>
            <person name="Wen G."/>
            <person name="Jones M.C."/>
            <person name="Hurles M.E."/>
            <person name="Andrews T.D."/>
            <person name="Scott C.E."/>
            <person name="Searle S."/>
            <person name="Ramser J."/>
            <person name="Whittaker A."/>
            <person name="Deadman R."/>
            <person name="Carter N.P."/>
            <person name="Hunt S.E."/>
            <person name="Chen R."/>
            <person name="Cree A."/>
            <person name="Gunaratne P."/>
            <person name="Havlak P."/>
            <person name="Hodgson A."/>
            <person name="Metzker M.L."/>
            <person name="Richards S."/>
            <person name="Scott G."/>
            <person name="Steffen D."/>
            <person name="Sodergren E."/>
            <person name="Wheeler D.A."/>
            <person name="Worley K.C."/>
            <person name="Ainscough R."/>
            <person name="Ambrose K.D."/>
            <person name="Ansari-Lari M.A."/>
            <person name="Aradhya S."/>
            <person name="Ashwell R.I."/>
            <person name="Babbage A.K."/>
            <person name="Bagguley C.L."/>
            <person name="Ballabio A."/>
            <person name="Banerjee R."/>
            <person name="Barker G.E."/>
            <person name="Barlow K.F."/>
            <person name="Barrett I.P."/>
            <person name="Bates K.N."/>
            <person name="Beare D.M."/>
            <person name="Beasley H."/>
            <person name="Beasley O."/>
            <person name="Beck A."/>
            <person name="Bethel G."/>
            <person name="Blechschmidt K."/>
            <person name="Brady N."/>
            <person name="Bray-Allen S."/>
            <person name="Bridgeman A.M."/>
            <person name="Brown A.J."/>
            <person name="Brown M.J."/>
            <person name="Bonnin D."/>
            <person name="Bruford E.A."/>
            <person name="Buhay C."/>
            <person name="Burch P."/>
            <person name="Burford D."/>
            <person name="Burgess J."/>
            <person name="Burrill W."/>
            <person name="Burton J."/>
            <person name="Bye J.M."/>
            <person name="Carder C."/>
            <person name="Carrel L."/>
            <person name="Chako J."/>
            <person name="Chapman J.C."/>
            <person name="Chavez D."/>
            <person name="Chen E."/>
            <person name="Chen G."/>
            <person name="Chen Y."/>
            <person name="Chen Z."/>
            <person name="Chinault C."/>
            <person name="Ciccodicola A."/>
            <person name="Clark S.Y."/>
            <person name="Clarke G."/>
            <person name="Clee C.M."/>
            <person name="Clegg S."/>
            <person name="Clerc-Blankenburg K."/>
            <person name="Clifford K."/>
            <person name="Cobley V."/>
            <person name="Cole C.G."/>
            <person name="Conquer J.S."/>
            <person name="Corby N."/>
            <person name="Connor R.E."/>
            <person name="David R."/>
            <person name="Davies J."/>
            <person name="Davis C."/>
            <person name="Davis J."/>
            <person name="Delgado O."/>
            <person name="Deshazo D."/>
            <person name="Dhami P."/>
            <person name="Ding Y."/>
            <person name="Dinh H."/>
            <person name="Dodsworth S."/>
            <person name="Draper H."/>
            <person name="Dugan-Rocha S."/>
            <person name="Dunham A."/>
            <person name="Dunn M."/>
            <person name="Durbin K.J."/>
            <person name="Dutta I."/>
            <person name="Eades T."/>
            <person name="Ellwood M."/>
            <person name="Emery-Cohen A."/>
            <person name="Errington H."/>
            <person name="Evans K.L."/>
            <person name="Faulkner L."/>
            <person name="Francis F."/>
            <person name="Frankland J."/>
            <person name="Fraser A.E."/>
            <person name="Galgoczy P."/>
            <person name="Gilbert J."/>
            <person name="Gill R."/>
            <person name="Gloeckner G."/>
            <person name="Gregory S.G."/>
            <person name="Gribble S."/>
            <person name="Griffiths C."/>
            <person name="Grocock R."/>
            <person name="Gu Y."/>
            <person name="Gwilliam R."/>
            <person name="Hamilton C."/>
            <person name="Hart E.A."/>
            <person name="Hawes A."/>
            <person name="Heath P.D."/>
            <person name="Heitmann K."/>
            <person name="Hennig S."/>
            <person name="Hernandez J."/>
            <person name="Hinzmann B."/>
            <person name="Ho S."/>
            <person name="Hoffs M."/>
            <person name="Howden P.J."/>
            <person name="Huckle E.J."/>
            <person name="Hume J."/>
            <person name="Hunt P.J."/>
            <person name="Hunt A.R."/>
            <person name="Isherwood J."/>
            <person name="Jacob L."/>
            <person name="Johnson D."/>
            <person name="Jones S."/>
            <person name="de Jong P.J."/>
            <person name="Joseph S.S."/>
            <person name="Keenan S."/>
            <person name="Kelly S."/>
            <person name="Kershaw J.K."/>
            <person name="Khan Z."/>
            <person name="Kioschis P."/>
            <person name="Klages S."/>
            <person name="Knights A.J."/>
            <person name="Kosiura A."/>
            <person name="Kovar-Smith C."/>
            <person name="Laird G.K."/>
            <person name="Langford C."/>
            <person name="Lawlor S."/>
            <person name="Leversha M."/>
            <person name="Lewis L."/>
            <person name="Liu W."/>
            <person name="Lloyd C."/>
            <person name="Lloyd D.M."/>
            <person name="Loulseged H."/>
            <person name="Loveland J.E."/>
            <person name="Lovell J.D."/>
            <person name="Lozado R."/>
            <person name="Lu J."/>
            <person name="Lyne R."/>
            <person name="Ma J."/>
            <person name="Maheshwari M."/>
            <person name="Matthews L.H."/>
            <person name="McDowall J."/>
            <person name="McLaren S."/>
            <person name="McMurray A."/>
            <person name="Meidl P."/>
            <person name="Meitinger T."/>
            <person name="Milne S."/>
            <person name="Miner G."/>
            <person name="Mistry S.L."/>
            <person name="Morgan M."/>
            <person name="Morris S."/>
            <person name="Mueller I."/>
            <person name="Mullikin J.C."/>
            <person name="Nguyen N."/>
            <person name="Nordsiek G."/>
            <person name="Nyakatura G."/>
            <person name="O'dell C.N."/>
            <person name="Okwuonu G."/>
            <person name="Palmer S."/>
            <person name="Pandian R."/>
            <person name="Parker D."/>
            <person name="Parrish J."/>
            <person name="Pasternak S."/>
            <person name="Patel D."/>
            <person name="Pearce A.V."/>
            <person name="Pearson D.M."/>
            <person name="Pelan S.E."/>
            <person name="Perez L."/>
            <person name="Porter K.M."/>
            <person name="Ramsey Y."/>
            <person name="Reichwald K."/>
            <person name="Rhodes S."/>
            <person name="Ridler K.A."/>
            <person name="Schlessinger D."/>
            <person name="Schueler M.G."/>
            <person name="Sehra H.K."/>
            <person name="Shaw-Smith C."/>
            <person name="Shen H."/>
            <person name="Sheridan E.M."/>
            <person name="Shownkeen R."/>
            <person name="Skuce C.D."/>
            <person name="Smith M.L."/>
            <person name="Sotheran E.C."/>
            <person name="Steingruber H.E."/>
            <person name="Steward C.A."/>
            <person name="Storey R."/>
            <person name="Swann R.M."/>
            <person name="Swarbreck D."/>
            <person name="Tabor P.E."/>
            <person name="Taudien S."/>
            <person name="Taylor T."/>
            <person name="Teague B."/>
            <person name="Thomas K."/>
            <person name="Thorpe A."/>
            <person name="Timms K."/>
            <person name="Tracey A."/>
            <person name="Trevanion S."/>
            <person name="Tromans A.C."/>
            <person name="d'Urso M."/>
            <person name="Verduzco D."/>
            <person name="Villasana D."/>
            <person name="Waldron L."/>
            <person name="Wall M."/>
            <person name="Wang Q."/>
            <person name="Warren J."/>
            <person name="Warry G.L."/>
            <person name="Wei X."/>
            <person name="West A."/>
            <person name="Whitehead S.L."/>
            <person name="Whiteley M.N."/>
            <person name="Wilkinson J.E."/>
            <person name="Willey D.L."/>
            <person name="Williams G."/>
            <person name="Williams L."/>
            <person name="Williamson A."/>
            <person name="Williamson H."/>
            <person name="Wilming L."/>
            <person name="Woodmansey R.L."/>
            <person name="Wray P.W."/>
            <person name="Yen J."/>
            <person name="Zhang J."/>
            <person name="Zhou J."/>
            <person name="Zoghbi H."/>
            <person name="Zorilla S."/>
            <person name="Buck D."/>
            <person name="Reinhardt R."/>
            <person name="Poustka A."/>
            <person name="Rosenthal A."/>
            <person name="Lehrach H."/>
            <person name="Meindl A."/>
            <person name="Minx P.J."/>
            <person name="Hillier L.W."/>
            <person name="Willard H.F."/>
            <person name="Wilson R.K."/>
            <person name="Waterston R.H."/>
            <person name="Rice C.M."/>
            <person name="Vaudin M."/>
            <person name="Coulson A."/>
            <person name="Nelson D.L."/>
            <person name="Weinstock G."/>
            <person name="Sulston J.E."/>
            <person name="Durbin R.M."/>
            <person name="Hubbard T."/>
            <person name="Gibbs R.A."/>
            <person name="Beck S."/>
            <person name="Rogers J."/>
            <person name="Bentley D.R."/>
        </authorList>
    </citation>
    <scope>NUCLEOTIDE SEQUENCE [LARGE SCALE GENOMIC DNA]</scope>
</reference>
<protein>
    <recommendedName>
        <fullName evidence="3">Thymosin beta-15C</fullName>
    </recommendedName>
</protein>
<keyword id="KW-0963">Cytoplasm</keyword>
<keyword id="KW-0206">Cytoskeleton</keyword>
<keyword id="KW-1185">Reference proteome</keyword>
<proteinExistence type="inferred from homology"/>
<comment type="function">
    <text evidence="1">Plays an important role in the organization of the cytoskeleton. Binds to and sequesters actin monomers (G-actin) and therefore inhibits actin polymerization.</text>
</comment>
<comment type="subcellular location">
    <subcellularLocation>
        <location evidence="1">Cytoplasm</location>
        <location evidence="1">Cytoskeleton</location>
    </subcellularLocation>
</comment>
<comment type="similarity">
    <text evidence="3">Belongs to the thymosin beta family.</text>
</comment>
<feature type="initiator methionine" description="Removed" evidence="1">
    <location>
        <position position="1"/>
    </location>
</feature>
<feature type="chain" id="PRO_0000457394" description="Thymosin beta-15C">
    <location>
        <begin position="2"/>
        <end position="45"/>
    </location>
</feature>
<feature type="region of interest" description="Disordered" evidence="2">
    <location>
        <begin position="1"/>
        <end position="45"/>
    </location>
</feature>
<feature type="compositionally biased region" description="Basic and acidic residues" evidence="2">
    <location>
        <begin position="1"/>
        <end position="27"/>
    </location>
</feature>
<feature type="compositionally biased region" description="Basic and acidic residues" evidence="2">
    <location>
        <begin position="35"/>
        <end position="45"/>
    </location>
</feature>
<organism>
    <name type="scientific">Homo sapiens</name>
    <name type="common">Human</name>
    <dbReference type="NCBI Taxonomy" id="9606"/>
    <lineage>
        <taxon>Eukaryota</taxon>
        <taxon>Metazoa</taxon>
        <taxon>Chordata</taxon>
        <taxon>Craniata</taxon>
        <taxon>Vertebrata</taxon>
        <taxon>Euteleostomi</taxon>
        <taxon>Mammalia</taxon>
        <taxon>Eutheria</taxon>
        <taxon>Euarchontoglires</taxon>
        <taxon>Primates</taxon>
        <taxon>Haplorrhini</taxon>
        <taxon>Catarrhini</taxon>
        <taxon>Hominidae</taxon>
        <taxon>Homo</taxon>
    </lineage>
</organism>
<evidence type="ECO:0000250" key="1">
    <source>
        <dbReference type="UniProtKB" id="P62328"/>
    </source>
</evidence>
<evidence type="ECO:0000256" key="2">
    <source>
        <dbReference type="SAM" id="MobiDB-lite"/>
    </source>
</evidence>
<evidence type="ECO:0000305" key="3"/>
<evidence type="ECO:0000312" key="4">
    <source>
        <dbReference type="HGNC" id="HGNC:55173"/>
    </source>
</evidence>
<sequence>MSDKPDLSEVEKFDRSKLKKTNTEEKNTLPSKETIQQEKECVQTS</sequence>
<gene>
    <name evidence="4" type="primary">TMSB15C</name>
</gene>